<comment type="function">
    <text evidence="1">An aminoacyl-tRNA editing enzyme that deacylates mischarged D-aminoacyl-tRNAs. Also deacylates mischarged glycyl-tRNA(Ala), protecting cells against glycine mischarging by AlaRS. Acts via tRNA-based rather than protein-based catalysis; rejects L-amino acids rather than detecting D-amino acids in the active site. By recycling D-aminoacyl-tRNA to D-amino acids and free tRNA molecules, this enzyme counteracts the toxicity associated with the formation of D-aminoacyl-tRNA entities in vivo and helps enforce protein L-homochirality.</text>
</comment>
<comment type="catalytic activity">
    <reaction evidence="1">
        <text>glycyl-tRNA(Ala) + H2O = tRNA(Ala) + glycine + H(+)</text>
        <dbReference type="Rhea" id="RHEA:53744"/>
        <dbReference type="Rhea" id="RHEA-COMP:9657"/>
        <dbReference type="Rhea" id="RHEA-COMP:13640"/>
        <dbReference type="ChEBI" id="CHEBI:15377"/>
        <dbReference type="ChEBI" id="CHEBI:15378"/>
        <dbReference type="ChEBI" id="CHEBI:57305"/>
        <dbReference type="ChEBI" id="CHEBI:78442"/>
        <dbReference type="ChEBI" id="CHEBI:78522"/>
        <dbReference type="EC" id="3.1.1.96"/>
    </reaction>
</comment>
<comment type="catalytic activity">
    <reaction evidence="1">
        <text>a D-aminoacyl-tRNA + H2O = a tRNA + a D-alpha-amino acid + H(+)</text>
        <dbReference type="Rhea" id="RHEA:13953"/>
        <dbReference type="Rhea" id="RHEA-COMP:10123"/>
        <dbReference type="Rhea" id="RHEA-COMP:10124"/>
        <dbReference type="ChEBI" id="CHEBI:15377"/>
        <dbReference type="ChEBI" id="CHEBI:15378"/>
        <dbReference type="ChEBI" id="CHEBI:59871"/>
        <dbReference type="ChEBI" id="CHEBI:78442"/>
        <dbReference type="ChEBI" id="CHEBI:79333"/>
        <dbReference type="EC" id="3.1.1.96"/>
    </reaction>
</comment>
<comment type="subunit">
    <text evidence="1">Homodimer.</text>
</comment>
<comment type="subcellular location">
    <subcellularLocation>
        <location evidence="1">Cytoplasm</location>
    </subcellularLocation>
</comment>
<comment type="domain">
    <text evidence="1">A Gly-cisPro motif from one monomer fits into the active site of the other monomer to allow specific chiral rejection of L-amino acids.</text>
</comment>
<comment type="similarity">
    <text evidence="1">Belongs to the DTD family.</text>
</comment>
<dbReference type="EC" id="3.1.1.96" evidence="1"/>
<dbReference type="EMBL" id="CP000482">
    <property type="protein sequence ID" value="ABK98127.1"/>
    <property type="molecule type" value="Genomic_DNA"/>
</dbReference>
<dbReference type="RefSeq" id="WP_011734441.1">
    <property type="nucleotide sequence ID" value="NC_008609.1"/>
</dbReference>
<dbReference type="SMR" id="A1ALA7"/>
<dbReference type="STRING" id="338966.Ppro_0496"/>
<dbReference type="KEGG" id="ppd:Ppro_0496"/>
<dbReference type="eggNOG" id="COG1490">
    <property type="taxonomic scope" value="Bacteria"/>
</dbReference>
<dbReference type="HOGENOM" id="CLU_076901_1_0_7"/>
<dbReference type="OrthoDB" id="9801395at2"/>
<dbReference type="Proteomes" id="UP000006732">
    <property type="component" value="Chromosome"/>
</dbReference>
<dbReference type="GO" id="GO:0005737">
    <property type="term" value="C:cytoplasm"/>
    <property type="evidence" value="ECO:0007669"/>
    <property type="project" value="UniProtKB-SubCell"/>
</dbReference>
<dbReference type="GO" id="GO:0051500">
    <property type="term" value="F:D-tyrosyl-tRNA(Tyr) deacylase activity"/>
    <property type="evidence" value="ECO:0007669"/>
    <property type="project" value="TreeGrafter"/>
</dbReference>
<dbReference type="GO" id="GO:0106026">
    <property type="term" value="F:Gly-tRNA(Ala) deacylase activity"/>
    <property type="evidence" value="ECO:0007669"/>
    <property type="project" value="UniProtKB-UniRule"/>
</dbReference>
<dbReference type="GO" id="GO:0043908">
    <property type="term" value="F:Ser(Gly)-tRNA(Ala) hydrolase activity"/>
    <property type="evidence" value="ECO:0007669"/>
    <property type="project" value="UniProtKB-UniRule"/>
</dbReference>
<dbReference type="GO" id="GO:0000049">
    <property type="term" value="F:tRNA binding"/>
    <property type="evidence" value="ECO:0007669"/>
    <property type="project" value="UniProtKB-UniRule"/>
</dbReference>
<dbReference type="GO" id="GO:0019478">
    <property type="term" value="P:D-amino acid catabolic process"/>
    <property type="evidence" value="ECO:0007669"/>
    <property type="project" value="UniProtKB-UniRule"/>
</dbReference>
<dbReference type="FunFam" id="3.50.80.10:FF:000001">
    <property type="entry name" value="D-aminoacyl-tRNA deacylase"/>
    <property type="match status" value="1"/>
</dbReference>
<dbReference type="Gene3D" id="3.50.80.10">
    <property type="entry name" value="D-tyrosyl-tRNA(Tyr) deacylase"/>
    <property type="match status" value="1"/>
</dbReference>
<dbReference type="HAMAP" id="MF_00518">
    <property type="entry name" value="Deacylase_Dtd"/>
    <property type="match status" value="1"/>
</dbReference>
<dbReference type="InterPro" id="IPR003732">
    <property type="entry name" value="Daa-tRNA_deacyls_DTD"/>
</dbReference>
<dbReference type="InterPro" id="IPR023509">
    <property type="entry name" value="DTD-like_sf"/>
</dbReference>
<dbReference type="NCBIfam" id="TIGR00256">
    <property type="entry name" value="D-aminoacyl-tRNA deacylase"/>
    <property type="match status" value="1"/>
</dbReference>
<dbReference type="PANTHER" id="PTHR10472:SF5">
    <property type="entry name" value="D-AMINOACYL-TRNA DEACYLASE 1"/>
    <property type="match status" value="1"/>
</dbReference>
<dbReference type="PANTHER" id="PTHR10472">
    <property type="entry name" value="D-TYROSYL-TRNA TYR DEACYLASE"/>
    <property type="match status" value="1"/>
</dbReference>
<dbReference type="Pfam" id="PF02580">
    <property type="entry name" value="Tyr_Deacylase"/>
    <property type="match status" value="1"/>
</dbReference>
<dbReference type="SUPFAM" id="SSF69500">
    <property type="entry name" value="DTD-like"/>
    <property type="match status" value="1"/>
</dbReference>
<organism>
    <name type="scientific">Pelobacter propionicus (strain DSM 2379 / NBRC 103807 / OttBd1)</name>
    <dbReference type="NCBI Taxonomy" id="338966"/>
    <lineage>
        <taxon>Bacteria</taxon>
        <taxon>Pseudomonadati</taxon>
        <taxon>Thermodesulfobacteriota</taxon>
        <taxon>Desulfuromonadia</taxon>
        <taxon>Desulfuromonadales</taxon>
        <taxon>Desulfuromonadaceae</taxon>
        <taxon>Pelobacter</taxon>
    </lineage>
</organism>
<reference key="1">
    <citation type="submission" date="2006-10" db="EMBL/GenBank/DDBJ databases">
        <title>Complete sequence of chromosome of Pelobacter propionicus DSM 2379.</title>
        <authorList>
            <consortium name="US DOE Joint Genome Institute"/>
            <person name="Copeland A."/>
            <person name="Lucas S."/>
            <person name="Lapidus A."/>
            <person name="Barry K."/>
            <person name="Detter J.C."/>
            <person name="Glavina del Rio T."/>
            <person name="Hammon N."/>
            <person name="Israni S."/>
            <person name="Dalin E."/>
            <person name="Tice H."/>
            <person name="Pitluck S."/>
            <person name="Saunders E."/>
            <person name="Brettin T."/>
            <person name="Bruce D."/>
            <person name="Han C."/>
            <person name="Tapia R."/>
            <person name="Schmutz J."/>
            <person name="Larimer F."/>
            <person name="Land M."/>
            <person name="Hauser L."/>
            <person name="Kyrpides N."/>
            <person name="Kim E."/>
            <person name="Lovley D."/>
            <person name="Richardson P."/>
        </authorList>
    </citation>
    <scope>NUCLEOTIDE SEQUENCE [LARGE SCALE GENOMIC DNA]</scope>
    <source>
        <strain>DSM 2379 / NBRC 103807 / OttBd1</strain>
    </source>
</reference>
<accession>A1ALA7</accession>
<gene>
    <name evidence="1" type="primary">dtd</name>
    <name type="ordered locus">Ppro_0496</name>
</gene>
<evidence type="ECO:0000255" key="1">
    <source>
        <dbReference type="HAMAP-Rule" id="MF_00518"/>
    </source>
</evidence>
<feature type="chain" id="PRO_1000050866" description="D-aminoacyl-tRNA deacylase">
    <location>
        <begin position="1"/>
        <end position="145"/>
    </location>
</feature>
<feature type="short sequence motif" description="Gly-cisPro motif, important for rejection of L-amino acids" evidence="1">
    <location>
        <begin position="137"/>
        <end position="138"/>
    </location>
</feature>
<name>DTD_PELPD</name>
<sequence>MKAVIQRVCSASVVVEGEVVGEIGQGILVLLGVEKGDDEAKASWLAEKIISLRIFGDDSDKMNLSLRDVGGSLLAVSQFTLAGNCAKGRRPSFDSAAPPEEGRRLYDHFVQAVRAKGVATATGIFQADMRVSLVNDGPVTFILER</sequence>
<keyword id="KW-0963">Cytoplasm</keyword>
<keyword id="KW-0378">Hydrolase</keyword>
<keyword id="KW-1185">Reference proteome</keyword>
<keyword id="KW-0694">RNA-binding</keyword>
<keyword id="KW-0820">tRNA-binding</keyword>
<protein>
    <recommendedName>
        <fullName evidence="1">D-aminoacyl-tRNA deacylase</fullName>
        <shortName evidence="1">DTD</shortName>
        <ecNumber evidence="1">3.1.1.96</ecNumber>
    </recommendedName>
    <alternativeName>
        <fullName evidence="1">Gly-tRNA(Ala) deacylase</fullName>
    </alternativeName>
</protein>
<proteinExistence type="inferred from homology"/>